<feature type="chain" id="PRO_0000221376" description="Histone H3-like centromeric protein CSE4">
    <location>
        <begin position="1"/>
        <end position="229"/>
    </location>
</feature>
<feature type="region of interest" description="Disordered" evidence="2">
    <location>
        <begin position="1"/>
        <end position="78"/>
    </location>
</feature>
<feature type="region of interest" description="H3-like">
    <location>
        <begin position="132"/>
        <end position="229"/>
    </location>
</feature>
<feature type="short sequence motif" description="Nuclear localization signal" evidence="1">
    <location>
        <begin position="115"/>
        <end position="132"/>
    </location>
</feature>
<feature type="compositionally biased region" description="Polar residues" evidence="2">
    <location>
        <begin position="1"/>
        <end position="35"/>
    </location>
</feature>
<feature type="compositionally biased region" description="Basic and acidic residues" evidence="2">
    <location>
        <begin position="53"/>
        <end position="68"/>
    </location>
</feature>
<feature type="mutagenesis site" description="In CSE4-102; impairs nuclear division by disrupting the core centromere structure; when associated with T-218." evidence="5">
    <original>L</original>
    <variation>S</variation>
    <location>
        <position position="176"/>
    </location>
</feature>
<feature type="mutagenesis site" description="In CSE4-111; impairs nuclear division by disrupting the core centromere structure." evidence="5">
    <original>L</original>
    <variation>Q</variation>
    <location>
        <position position="194"/>
    </location>
</feature>
<feature type="mutagenesis site" description="In CSE4-110; impairs nuclear division by disrupting the core centromere structure." evidence="5">
    <original>L</original>
    <variation>S</variation>
    <location>
        <position position="197"/>
    </location>
</feature>
<feature type="mutagenesis site" description="In CSE4-102; impairs nuclear division by disrupting the core centromere structure; when associated with S-176." evidence="5">
    <original>M</original>
    <variation>T</variation>
    <location>
        <position position="218"/>
    </location>
</feature>
<feature type="helix" evidence="22">
    <location>
        <begin position="34"/>
        <end position="47"/>
    </location>
</feature>
<feature type="helix" evidence="21">
    <location>
        <begin position="137"/>
        <end position="145"/>
    </location>
</feature>
<feature type="helix" evidence="21">
    <location>
        <begin position="155"/>
        <end position="166"/>
    </location>
</feature>
<feature type="strand" evidence="21">
    <location>
        <begin position="172"/>
        <end position="174"/>
    </location>
</feature>
<feature type="helix" evidence="21">
    <location>
        <begin position="180"/>
        <end position="206"/>
    </location>
</feature>
<feature type="turn" evidence="21">
    <location>
        <begin position="207"/>
        <end position="209"/>
    </location>
</feature>
<feature type="strand" evidence="21">
    <location>
        <begin position="211"/>
        <end position="213"/>
    </location>
</feature>
<feature type="helix" evidence="21">
    <location>
        <begin position="215"/>
        <end position="225"/>
    </location>
</feature>
<comment type="function">
    <text evidence="3 4 5 7 8 10 11 12 15 16 17">Histone H3-like nucleosomal protein that is specifically found in centromeric nucleosomes. Replaces conventional H3 in the nucleosome core of centromeric chromatin that serves as an assembly site for the inner kinetochore. Required for recruitment and assembly of kinetochore proteins, mitotic progression and chromosome segregation. May serve as an epigenetic mark that propagates centromere identity through replication and cell division. Required for functional chromatin architecture at the yeast 2-micron circle partitioning locus and promotes equal plasmid segregation.</text>
</comment>
<comment type="subunit">
    <text evidence="6 9 13 14">Component of centromeric nucleosomes, where DNA is wrapped around a histone octamer core (PubMed:14581449, PubMed:32004465). The octamer contains two molecules each of H2A, H2B, CSE4/CENPA and H4 assembled in one CSE4-H4 heterotetramer and two H2A-H2B heterodimers (PubMed:14581449, PubMed:32004465). Interacts with the inner kinetochore (PubMed:14581449). Interacts with the central kinetochore protein CTF19 (PubMed:10958698). Interacts with YTA7 (PubMed:32079723).</text>
</comment>
<comment type="interaction">
    <interactant intactId="EBI-5182">
        <id>P36012</id>
    </interactant>
    <interactant intactId="EBI-23268">
        <id>P53267</id>
        <label>DAM1</label>
    </interactant>
    <organismsDiffer>false</organismsDiffer>
    <experiments>2</experiments>
</comment>
<comment type="interaction">
    <interactant intactId="EBI-5182">
        <id>P36012</id>
    </interactant>
    <interactant intactId="EBI-31788">
        <id>Q12334</id>
        <label>SCM3</label>
    </interactant>
    <organismsDiffer>false</organismsDiffer>
    <experiments>5</experiments>
</comment>
<comment type="subcellular location">
    <subcellularLocation>
        <location evidence="9">Nucleus</location>
    </subcellularLocation>
    <subcellularLocation>
        <location evidence="9">Chromosome</location>
        <location evidence="9">Centromere</location>
    </subcellularLocation>
</comment>
<comment type="PTM">
    <text evidence="19">Ubiquitinated (Probable). Is degraded through ubiquitin-mediated proteolysis when not protected by its association to the kinetochore (Probable).</text>
</comment>
<comment type="miscellaneous">
    <text evidence="15">Mutation in CSE4 causes chromosome non-disjunction and cell cycle arrest at mitosis.</text>
</comment>
<comment type="similarity">
    <text evidence="18">Belongs to the histone H3 family.</text>
</comment>
<comment type="sequence caution" evidence="18">
    <conflict type="frameshift">
        <sequence resource="EMBL-CDS" id="CAA81884"/>
    </conflict>
</comment>
<name>CENPA_YEAST</name>
<sequence>MSSKQQWVSSAIQSDSSGRSLSNVNRLAGDQQSINDRALSLLQRTRATKNLFPRREERRRYESSKSDLDIETDYEDQAGNLEIETENEEEAEMETEVPAPVRTHSYALDRYVRQKRREKQRKQSLKRVEKKYTPSELALYEIRKYQRSTDLLISKIPFARLVKEVTDEFTTKDQDLRWQSMAIMALQEASEAYLVGLLEHTNLLALHAKRITIMKKDMQLARRIRGQFI</sequence>
<organism>
    <name type="scientific">Saccharomyces cerevisiae (strain ATCC 204508 / S288c)</name>
    <name type="common">Baker's yeast</name>
    <dbReference type="NCBI Taxonomy" id="559292"/>
    <lineage>
        <taxon>Eukaryota</taxon>
        <taxon>Fungi</taxon>
        <taxon>Dikarya</taxon>
        <taxon>Ascomycota</taxon>
        <taxon>Saccharomycotina</taxon>
        <taxon>Saccharomycetes</taxon>
        <taxon>Saccharomycetales</taxon>
        <taxon>Saccharomycetaceae</taxon>
        <taxon>Saccharomyces</taxon>
    </lineage>
</organism>
<reference key="1">
    <citation type="journal article" date="1995" name="Genes Dev.">
        <title>A mutation in CSE4, an essential gene encoding a novel chromatin-associated protein in yeast, causes chromosome nondisjunction and cell cycle arrest at mitosis.</title>
        <authorList>
            <person name="Stoler S."/>
            <person name="Keith K.C."/>
            <person name="Curnick K.E."/>
            <person name="Fitzgerald-Hayes M."/>
        </authorList>
    </citation>
    <scope>NUCLEOTIDE SEQUENCE [GENOMIC DNA]</scope>
    <scope>FUNCTION</scope>
</reference>
<reference key="2">
    <citation type="journal article" date="1993" name="Yeast">
        <title>The sequence of a 17.5 kb DNA fragment on the left arm of yeast chromosome XI identifies the protein kinase gene ELM1, the DNA primase gene PRI2, a new gene encoding a putative histone and seven new open reading frames.</title>
        <authorList>
            <person name="Purnelle B."/>
            <person name="Tettelin H."/>
            <person name="van Dyck L."/>
            <person name="Skala J."/>
            <person name="Goffeau A."/>
        </authorList>
    </citation>
    <scope>NUCLEOTIDE SEQUENCE [LARGE SCALE GENOMIC DNA]</scope>
    <source>
        <strain>ATCC 204508 / S288c</strain>
    </source>
</reference>
<reference key="3">
    <citation type="journal article" date="2014" name="G3 (Bethesda)">
        <title>The reference genome sequence of Saccharomyces cerevisiae: Then and now.</title>
        <authorList>
            <person name="Engel S.R."/>
            <person name="Dietrich F.S."/>
            <person name="Fisk D.G."/>
            <person name="Binkley G."/>
            <person name="Balakrishnan R."/>
            <person name="Costanzo M.C."/>
            <person name="Dwight S.S."/>
            <person name="Hitz B.C."/>
            <person name="Karra K."/>
            <person name="Nash R.S."/>
            <person name="Weng S."/>
            <person name="Wong E.D."/>
            <person name="Lloyd P."/>
            <person name="Skrzypek M.S."/>
            <person name="Miyasato S.R."/>
            <person name="Simison M."/>
            <person name="Cherry J.M."/>
        </authorList>
    </citation>
    <scope>GENOME REANNOTATION</scope>
    <source>
        <strain>ATCC 204508 / S288c</strain>
    </source>
</reference>
<reference key="4">
    <citation type="journal article" date="1994" name="Nature">
        <title>Complete DNA sequence of yeast chromosome XI.</title>
        <authorList>
            <person name="Dujon B."/>
            <person name="Alexandraki D."/>
            <person name="Andre B."/>
            <person name="Ansorge W."/>
            <person name="Baladron V."/>
            <person name="Ballesta J.P.G."/>
            <person name="Banrevi A."/>
            <person name="Bolle P.-A."/>
            <person name="Bolotin-Fukuhara M."/>
            <person name="Bossier P."/>
            <person name="Bou G."/>
            <person name="Boyer J."/>
            <person name="Buitrago M.J."/>
            <person name="Cheret G."/>
            <person name="Colleaux L."/>
            <person name="Daignan-Fornier B."/>
            <person name="del Rey F."/>
            <person name="Dion C."/>
            <person name="Domdey H."/>
            <person name="Duesterhoeft A."/>
            <person name="Duesterhus S."/>
            <person name="Entian K.-D."/>
            <person name="Erfle H."/>
            <person name="Esteban P.F."/>
            <person name="Feldmann H."/>
            <person name="Fernandes L."/>
            <person name="Fobo G.M."/>
            <person name="Fritz C."/>
            <person name="Fukuhara H."/>
            <person name="Gabel C."/>
            <person name="Gaillon L."/>
            <person name="Garcia-Cantalejo J.M."/>
            <person name="Garcia-Ramirez J.J."/>
            <person name="Gent M.E."/>
            <person name="Ghazvini M."/>
            <person name="Goffeau A."/>
            <person name="Gonzalez A."/>
            <person name="Grothues D."/>
            <person name="Guerreiro P."/>
            <person name="Hegemann J.H."/>
            <person name="Hewitt N."/>
            <person name="Hilger F."/>
            <person name="Hollenberg C.P."/>
            <person name="Horaitis O."/>
            <person name="Indge K.J."/>
            <person name="Jacquier A."/>
            <person name="James C.M."/>
            <person name="Jauniaux J.-C."/>
            <person name="Jimenez A."/>
            <person name="Keuchel H."/>
            <person name="Kirchrath L."/>
            <person name="Kleine K."/>
            <person name="Koetter P."/>
            <person name="Legrain P."/>
            <person name="Liebl S."/>
            <person name="Louis E.J."/>
            <person name="Maia e Silva A."/>
            <person name="Marck C."/>
            <person name="Monnier A.-L."/>
            <person name="Moestl D."/>
            <person name="Mueller S."/>
            <person name="Obermaier B."/>
            <person name="Oliver S.G."/>
            <person name="Pallier C."/>
            <person name="Pascolo S."/>
            <person name="Pfeiffer F."/>
            <person name="Philippsen P."/>
            <person name="Planta R.J."/>
            <person name="Pohl F.M."/>
            <person name="Pohl T.M."/>
            <person name="Poehlmann R."/>
            <person name="Portetelle D."/>
            <person name="Purnelle B."/>
            <person name="Puzos V."/>
            <person name="Ramezani Rad M."/>
            <person name="Rasmussen S.W."/>
            <person name="Remacha M.A."/>
            <person name="Revuelta J.L."/>
            <person name="Richard G.-F."/>
            <person name="Rieger M."/>
            <person name="Rodrigues-Pousada C."/>
            <person name="Rose M."/>
            <person name="Rupp T."/>
            <person name="Santos M.A."/>
            <person name="Schwager C."/>
            <person name="Sensen C."/>
            <person name="Skala J."/>
            <person name="Soares H."/>
            <person name="Sor F."/>
            <person name="Stegemann J."/>
            <person name="Tettelin H."/>
            <person name="Thierry A."/>
            <person name="Tzermia M."/>
            <person name="Urrestarazu L.A."/>
            <person name="van Dyck L."/>
            <person name="van Vliet-Reedijk J.C."/>
            <person name="Valens M."/>
            <person name="Vandenbol M."/>
            <person name="Vilela C."/>
            <person name="Vissers S."/>
            <person name="von Wettstein D."/>
            <person name="Voss H."/>
            <person name="Wiemann S."/>
            <person name="Xu G."/>
            <person name="Zimmermann J."/>
            <person name="Haasemann M."/>
            <person name="Becker I."/>
            <person name="Mewes H.-W."/>
        </authorList>
    </citation>
    <scope>NUCLEOTIDE SEQUENCE [LARGE SCALE GENOMIC DNA]</scope>
    <source>
        <strain>ATCC 204508 / S288c</strain>
    </source>
</reference>
<reference key="5">
    <citation type="journal article" date="1998" name="Cell">
        <title>Cse4p is a component of the core centromere of Saccharomyces cerevisiae.</title>
        <authorList>
            <person name="Meluh P.B."/>
            <person name="Yang P."/>
            <person name="Glowczewski L."/>
            <person name="Koshland D."/>
            <person name="Smith M.M."/>
        </authorList>
    </citation>
    <scope>FUNCTION</scope>
    <scope>SUBCELLULAR LOCATION</scope>
</reference>
<reference key="6">
    <citation type="journal article" date="1998" name="Genetics">
        <title>Mutations synthetically lethal with cep1 target S. cerevisiae kinetochore components.</title>
        <authorList>
            <person name="Baker R.E."/>
            <person name="Harris K."/>
            <person name="Zhang K."/>
        </authorList>
    </citation>
    <scope>FUNCTION</scope>
</reference>
<reference key="7">
    <citation type="journal article" date="1999" name="Genes Dev.">
        <title>A putative protein complex consisting of Ctf19, Mcm21, and Okp1 represents a missing link in the budding yeast kinetochore.</title>
        <authorList>
            <person name="Ortiz J."/>
            <person name="Stemmann O."/>
            <person name="Rank S."/>
            <person name="Lechner J."/>
        </authorList>
    </citation>
    <scope>SUBCELLULAR LOCATION</scope>
</reference>
<reference key="8">
    <citation type="journal article" date="1999" name="Mol. Cell. Biol.">
        <title>Analysis of primary structural determinants that distinguish the centromere-specific function of histone variant Cse4p from histone H3.</title>
        <authorList>
            <person name="Keith K.C."/>
            <person name="Baker R.E."/>
            <person name="Chen Y."/>
            <person name="Harris K."/>
            <person name="Stoler S."/>
            <person name="Fitzgerald-Hayes M."/>
        </authorList>
    </citation>
    <scope>FUNCTION</scope>
</reference>
<reference key="9">
    <citation type="journal article" date="2000" name="Genetics">
        <title>CSE4 genetically interacts with the Saccharomyces cerevisiae centromere DNA elements CDE I and CDE II but not CDE III. Implications for the path of the centromere dna around a cse4p variant nucleosome.</title>
        <authorList>
            <person name="Keith K.C."/>
            <person name="Fitzgerald-Hayes M."/>
        </authorList>
    </citation>
    <scope>FUNCTION</scope>
    <scope>SUBCELLULAR LOCATION</scope>
</reference>
<reference key="10">
    <citation type="journal article" date="2000" name="Mol. Cell. Biol.">
        <title>Histone-histone interactions and centromere function.</title>
        <authorList>
            <person name="Glowczewski L."/>
            <person name="Yang P."/>
            <person name="Kalashnikova T."/>
            <person name="Santisteban M.S."/>
            <person name="Smith M.M."/>
        </authorList>
    </citation>
    <scope>FUNCTION</scope>
    <scope>MUTAGENESIS OF LEU-176; LEU-194; LEU-197 AND MET-218</scope>
</reference>
<reference key="11">
    <citation type="journal article" date="1999" name="Cell">
        <title>Identification of cohesin association sites at centromeres and along chromosome arms.</title>
        <authorList>
            <person name="Tanaka T."/>
            <person name="Cosma M.P."/>
            <person name="Wirth K."/>
            <person name="Nasmyth K."/>
        </authorList>
    </citation>
    <scope>FUNCTION</scope>
</reference>
<reference key="12">
    <citation type="journal article" date="2000" name="Mol. Cell. Biol.">
        <title>The N-terminus of the centromere H3-like protein Cse4p performs an essential function distinct from that of the histone fold domain.</title>
        <authorList>
            <person name="Chen Y."/>
            <person name="Baker R.E."/>
            <person name="Keith K.C."/>
            <person name="Harris K."/>
            <person name="Stoler S."/>
            <person name="Fitzgerald-Hayes M."/>
        </authorList>
    </citation>
    <scope>INTERACTION WITH CTF19</scope>
</reference>
<reference key="13">
    <citation type="journal article" date="2001" name="Genetics">
        <title>Genes involved in sister chromatid separation and segregation in the budding yeast Saccharomyces cerevisiae.</title>
        <authorList>
            <person name="Biggins S."/>
            <person name="Bhalla N."/>
            <person name="Chang A."/>
            <person name="Smith D.L."/>
            <person name="Murray A.W."/>
        </authorList>
    </citation>
    <scope>FUNCTION</scope>
</reference>
<reference key="14">
    <citation type="journal article" date="2001" name="J. Cell Biol.">
        <title>Budding yeast chromosome structure and dynamics during mitosis.</title>
        <authorList>
            <person name="Pearson C.G."/>
            <person name="Maddox P.S."/>
            <person name="Salmon E.D."/>
            <person name="Bloom K.S."/>
        </authorList>
    </citation>
    <scope>SUBCELLULAR LOCATION</scope>
</reference>
<reference key="15">
    <citation type="journal article" date="2003" name="J. Cell Biol.">
        <title>Architecture of the budding yeast kinetochore reveals a conserved molecular core.</title>
        <authorList>
            <person name="Westermann S."/>
            <person name="Cheeseman I.M."/>
            <person name="Anderson S."/>
            <person name="Yates J.R. III"/>
            <person name="Drubin D.G."/>
            <person name="Barnes G."/>
        </authorList>
    </citation>
    <scope>IDENTIFICATION IN CENTROMERIC NUCLEOSOMES</scope>
    <scope>INTERACTION WITH THE INNER KINETOCHORE</scope>
    <scope>SUBCELLULAR LOCATION</scope>
</reference>
<reference key="16">
    <citation type="journal article" date="2004" name="Curr. Biol.">
        <title>Proteolysis contributes to the exclusive centromere localization of the yeast Cse4/CENP-A histone H3 variant.</title>
        <authorList>
            <person name="Collins K.A."/>
            <person name="Furuyama S."/>
            <person name="Biggins S."/>
        </authorList>
    </citation>
    <scope>SUBCELLULAR LOCATION</scope>
    <scope>UBIQUITIN-MEDIATED PROTEOLYSIS</scope>
</reference>
<reference key="17">
    <citation type="journal article" date="2004" name="Eukaryot. Cell">
        <title>The histone fold domain of Cse4 is sufficient for CEN targeting and propagation of active centromeres in budding yeast.</title>
        <authorList>
            <person name="Morey L."/>
            <person name="Barnes K."/>
            <person name="Chen Y."/>
            <person name="Fitzgerald-Hayes M."/>
            <person name="Baker R.E."/>
        </authorList>
    </citation>
    <scope>FUNCTION</scope>
</reference>
<reference key="18">
    <citation type="journal article" date="2005" name="Mol. Biol. Cell">
        <title>De novo kinetochore assembly requires the centromeric histone H3 variant.</title>
        <authorList>
            <person name="Collins K.A."/>
            <person name="Castillo A.R."/>
            <person name="Tatsutani S.Y."/>
            <person name="Biggins S."/>
        </authorList>
    </citation>
    <scope>FUNCTION</scope>
    <scope>SUBCELLULAR LOCATION</scope>
</reference>
<reference key="19">
    <citation type="journal article" date="2006" name="J. Cell Biol.">
        <title>The centromere-specific histone variant Cse4p (CENP-A) is essential for functional chromatin architecture at the yeast 2-micrometer circle partitioning locus and promotes equal plasmid segregation.</title>
        <authorList>
            <person name="Hajra S."/>
            <person name="Ghosh S.K."/>
            <person name="Jayaram M."/>
        </authorList>
    </citation>
    <scope>FUNCTION</scope>
    <scope>SUBCELLULAR LOCATION</scope>
</reference>
<reference key="20">
    <citation type="journal article" date="2006" name="Nat. Cell Biol.">
        <title>Molecular architecture of a kinetochore-microtubule attachment site.</title>
        <authorList>
            <person name="Joglekar A.P."/>
            <person name="Bouck D.C."/>
            <person name="Molk J.N."/>
            <person name="Bloom K.S."/>
            <person name="Salmon E.D."/>
        </authorList>
    </citation>
    <scope>SUBCELLULAR LOCATION</scope>
</reference>
<reference key="21">
    <citation type="journal article" date="2020" name="Proc. Natl. Acad. Sci. U.S.A.">
        <title>The ATAD2/ANCCA homolog Yta7 cooperates with Scm3HJURP to deposit Cse4CENP-A at the centromere in yeast.</title>
        <authorList>
            <person name="Shahnejat-Bushehri S."/>
            <person name="Ehrenhofer-Murray A.E."/>
        </authorList>
    </citation>
    <scope>INTERACTION WITH YTA7</scope>
</reference>
<reference key="22">
    <citation type="journal article" date="2006" name="Curr. Biol.">
        <title>The path of DNA in the kinetochore.</title>
        <authorList>
            <person name="Bloom K.S."/>
            <person name="Sharma S."/>
            <person name="Dokholyan N.V."/>
        </authorList>
    </citation>
    <scope>3D-STRUCTURE MODELING OF 1-228</scope>
</reference>
<reference evidence="20" key="23">
    <citation type="journal article" date="2020" name="Structure">
        <title>Cryoelectron Microscopy Structure of a Yeast Centromeric Nucleosome at 2.7A Resolution.</title>
        <authorList>
            <person name="Migl D."/>
            <person name="Kschonsak M."/>
            <person name="Arthur C.P."/>
            <person name="Khin Y."/>
            <person name="Harrison S.C."/>
            <person name="Ciferri C."/>
            <person name="Dimitrova Y.N."/>
        </authorList>
    </citation>
    <scope>STRUCTURE BY ELECTRON MICROSCOPY (2.70 ANGSTROMS)</scope>
    <scope>COMPONENT OF CENTROMERIC NUCLEOSOMES</scope>
</reference>
<protein>
    <recommendedName>
        <fullName>Histone H3-like centromeric protein CSE4</fullName>
    </recommendedName>
    <alternativeName>
        <fullName>CENP-A homolog</fullName>
    </alternativeName>
    <alternativeName>
        <fullName evidence="18">CENPA homolog</fullName>
    </alternativeName>
    <alternativeName>
        <fullName>Chromosome segregation protein 4</fullName>
    </alternativeName>
</protein>
<accession>P36012</accession>
<accession>D6VXN8</accession>
<gene>
    <name type="primary">CSE4</name>
    <name type="synonym">CSL2</name>
    <name type="ordered locus">YKL049C</name>
    <name type="ORF">YKL262</name>
</gene>
<proteinExistence type="evidence at protein level"/>
<evidence type="ECO:0000255" key="1"/>
<evidence type="ECO:0000256" key="2">
    <source>
        <dbReference type="SAM" id="MobiDB-lite"/>
    </source>
</evidence>
<evidence type="ECO:0000269" key="3">
    <source>
    </source>
</evidence>
<evidence type="ECO:0000269" key="4">
    <source>
    </source>
</evidence>
<evidence type="ECO:0000269" key="5">
    <source>
    </source>
</evidence>
<evidence type="ECO:0000269" key="6">
    <source>
    </source>
</evidence>
<evidence type="ECO:0000269" key="7">
    <source>
    </source>
</evidence>
<evidence type="ECO:0000269" key="8">
    <source>
    </source>
</evidence>
<evidence type="ECO:0000269" key="9">
    <source>
    </source>
</evidence>
<evidence type="ECO:0000269" key="10">
    <source>
    </source>
</evidence>
<evidence type="ECO:0000269" key="11">
    <source>
    </source>
</evidence>
<evidence type="ECO:0000269" key="12">
    <source>
    </source>
</evidence>
<evidence type="ECO:0000269" key="13">
    <source>
    </source>
</evidence>
<evidence type="ECO:0000269" key="14">
    <source>
    </source>
</evidence>
<evidence type="ECO:0000269" key="15">
    <source>
    </source>
</evidence>
<evidence type="ECO:0000269" key="16">
    <source>
    </source>
</evidence>
<evidence type="ECO:0000269" key="17">
    <source>
    </source>
</evidence>
<evidence type="ECO:0000305" key="18"/>
<evidence type="ECO:0000305" key="19">
    <source>
    </source>
</evidence>
<evidence type="ECO:0007744" key="20">
    <source>
        <dbReference type="PDB" id="6UPH"/>
    </source>
</evidence>
<evidence type="ECO:0007829" key="21">
    <source>
        <dbReference type="PDB" id="6UPH"/>
    </source>
</evidence>
<evidence type="ECO:0007829" key="22">
    <source>
        <dbReference type="PDB" id="8T0P"/>
    </source>
</evidence>
<dbReference type="EMBL" id="U20327">
    <property type="protein sequence ID" value="AAB60309.1"/>
    <property type="molecule type" value="Genomic_DNA"/>
</dbReference>
<dbReference type="EMBL" id="X71621">
    <property type="status" value="NOT_ANNOTATED_CDS"/>
    <property type="molecule type" value="Genomic_DNA"/>
</dbReference>
<dbReference type="EMBL" id="Z28049">
    <property type="protein sequence ID" value="CAA81884.1"/>
    <property type="status" value="ALT_FRAME"/>
    <property type="molecule type" value="Genomic_DNA"/>
</dbReference>
<dbReference type="EMBL" id="BK006944">
    <property type="protein sequence ID" value="DAA09108.1"/>
    <property type="molecule type" value="Genomic_DNA"/>
</dbReference>
<dbReference type="PIR" id="S37870">
    <property type="entry name" value="S37870"/>
</dbReference>
<dbReference type="RefSeq" id="NP_012875.2">
    <property type="nucleotide sequence ID" value="NM_001179615.1"/>
</dbReference>
<dbReference type="PDB" id="2L5A">
    <property type="method" value="NMR"/>
    <property type="chains" value="A=151-228"/>
</dbReference>
<dbReference type="PDB" id="2LY8">
    <property type="method" value="NMR"/>
    <property type="chains" value="A=152-225"/>
</dbReference>
<dbReference type="PDB" id="6UPH">
    <property type="method" value="EM"/>
    <property type="resolution" value="2.70 A"/>
    <property type="chains" value="A/E=1-229"/>
</dbReference>
<dbReference type="PDB" id="7ON1">
    <property type="method" value="EM"/>
    <property type="resolution" value="3.35 A"/>
    <property type="chains" value="a/e=1-229"/>
</dbReference>
<dbReference type="PDB" id="8OW0">
    <property type="method" value="EM"/>
    <property type="resolution" value="3.40 A"/>
    <property type="chains" value="a/e=1-229"/>
</dbReference>
<dbReference type="PDB" id="8OW1">
    <property type="method" value="EM"/>
    <property type="resolution" value="3.70 A"/>
    <property type="chains" value="a/e=1-229"/>
</dbReference>
<dbReference type="PDB" id="8T0P">
    <property type="method" value="X-ray"/>
    <property type="resolution" value="1.73 A"/>
    <property type="chains" value="C=32-49"/>
</dbReference>
<dbReference type="PDBsum" id="2L5A"/>
<dbReference type="PDBsum" id="2LY8"/>
<dbReference type="PDBsum" id="6UPH"/>
<dbReference type="PDBsum" id="7ON1"/>
<dbReference type="PDBsum" id="8OW0"/>
<dbReference type="PDBsum" id="8OW1"/>
<dbReference type="PDBsum" id="8T0P"/>
<dbReference type="EMDB" id="EMD-17226"/>
<dbReference type="EMDB" id="EMD-17227"/>
<dbReference type="EMDB" id="EMD-20839"/>
<dbReference type="EMDB" id="EMD-4579"/>
<dbReference type="SMR" id="P36012"/>
<dbReference type="BioGRID" id="34084">
    <property type="interactions" value="1312"/>
</dbReference>
<dbReference type="DIP" id="DIP-8048N"/>
<dbReference type="FunCoup" id="P36012">
    <property type="interactions" value="464"/>
</dbReference>
<dbReference type="IntAct" id="P36012">
    <property type="interactions" value="10"/>
</dbReference>
<dbReference type="STRING" id="4932.YKL049C"/>
<dbReference type="iPTMnet" id="P36012"/>
<dbReference type="PaxDb" id="4932-YKL049C"/>
<dbReference type="PeptideAtlas" id="P36012"/>
<dbReference type="EnsemblFungi" id="YKL049C_mRNA">
    <property type="protein sequence ID" value="YKL049C"/>
    <property type="gene ID" value="YKL049C"/>
</dbReference>
<dbReference type="GeneID" id="853817"/>
<dbReference type="KEGG" id="sce:YKL049C"/>
<dbReference type="AGR" id="SGD:S000001532"/>
<dbReference type="SGD" id="S000001532">
    <property type="gene designation" value="CSE4"/>
</dbReference>
<dbReference type="VEuPathDB" id="FungiDB:YKL049C"/>
<dbReference type="eggNOG" id="KOG1745">
    <property type="taxonomic scope" value="Eukaryota"/>
</dbReference>
<dbReference type="GeneTree" id="ENSGT01130000278271"/>
<dbReference type="HOGENOM" id="CLU_078295_3_0_1"/>
<dbReference type="InParanoid" id="P36012"/>
<dbReference type="OMA" id="KRITIMR"/>
<dbReference type="OrthoDB" id="842664at2759"/>
<dbReference type="BioCyc" id="YEAST:G3O-31850-MONOMER"/>
<dbReference type="Reactome" id="R-SCE-2299718">
    <property type="pathway name" value="Condensation of Prophase Chromosomes"/>
</dbReference>
<dbReference type="Reactome" id="R-SCE-2559580">
    <property type="pathway name" value="Oxidative Stress Induced Senescence"/>
</dbReference>
<dbReference type="Reactome" id="R-SCE-3214815">
    <property type="pathway name" value="HDACs deacetylate histones"/>
</dbReference>
<dbReference type="Reactome" id="R-SCE-3214841">
    <property type="pathway name" value="PKMTs methylate histone lysines"/>
</dbReference>
<dbReference type="Reactome" id="R-SCE-3214842">
    <property type="pathway name" value="HDMs demethylate histones"/>
</dbReference>
<dbReference type="Reactome" id="R-SCE-3214858">
    <property type="pathway name" value="RMTs methylate histone arginines"/>
</dbReference>
<dbReference type="Reactome" id="R-SCE-427359">
    <property type="pathway name" value="SIRT1 negatively regulates rRNA expression"/>
</dbReference>
<dbReference type="Reactome" id="R-SCE-5625886">
    <property type="pathway name" value="Activated PKN1 stimulates transcription of AR (androgen receptor) regulated genes KLK2 and KLK3"/>
</dbReference>
<dbReference type="Reactome" id="R-SCE-5693565">
    <property type="pathway name" value="Recruitment and ATM-mediated phosphorylation of repair and signaling proteins at DNA double strand breaks"/>
</dbReference>
<dbReference type="Reactome" id="R-SCE-68616">
    <property type="pathway name" value="Assembly of the ORC complex at the origin of replication"/>
</dbReference>
<dbReference type="Reactome" id="R-SCE-73772">
    <property type="pathway name" value="RNA Polymerase I Promoter Escape"/>
</dbReference>
<dbReference type="Reactome" id="R-SCE-9018519">
    <property type="pathway name" value="Estrogen-dependent gene expression"/>
</dbReference>
<dbReference type="BioGRID-ORCS" id="853817">
    <property type="hits" value="2 hits in 10 CRISPR screens"/>
</dbReference>
<dbReference type="EvolutionaryTrace" id="P36012"/>
<dbReference type="PRO" id="PR:P36012"/>
<dbReference type="Proteomes" id="UP000002311">
    <property type="component" value="Chromosome XI"/>
</dbReference>
<dbReference type="RNAct" id="P36012">
    <property type="molecule type" value="protein"/>
</dbReference>
<dbReference type="GO" id="GO:0005729">
    <property type="term" value="C:2-micrometer circle DNA"/>
    <property type="evidence" value="ECO:0000314"/>
    <property type="project" value="SGD"/>
</dbReference>
<dbReference type="GO" id="GO:0043505">
    <property type="term" value="C:CENP-A containing nucleosome"/>
    <property type="evidence" value="ECO:0000314"/>
    <property type="project" value="UniProtKB"/>
</dbReference>
<dbReference type="GO" id="GO:0000779">
    <property type="term" value="C:condensed chromosome, centromeric region"/>
    <property type="evidence" value="ECO:0000314"/>
    <property type="project" value="SGD"/>
</dbReference>
<dbReference type="GO" id="GO:0000776">
    <property type="term" value="C:kinetochore"/>
    <property type="evidence" value="ECO:0000314"/>
    <property type="project" value="SGD"/>
</dbReference>
<dbReference type="GO" id="GO:0005634">
    <property type="term" value="C:nucleus"/>
    <property type="evidence" value="ECO:0000318"/>
    <property type="project" value="GO_Central"/>
</dbReference>
<dbReference type="GO" id="GO:0005777">
    <property type="term" value="C:peroxisome"/>
    <property type="evidence" value="ECO:0000314"/>
    <property type="project" value="SGD"/>
</dbReference>
<dbReference type="GO" id="GO:0019237">
    <property type="term" value="F:centromeric DNA binding"/>
    <property type="evidence" value="ECO:0000314"/>
    <property type="project" value="SGD"/>
</dbReference>
<dbReference type="GO" id="GO:0046982">
    <property type="term" value="F:protein heterodimerization activity"/>
    <property type="evidence" value="ECO:0007669"/>
    <property type="project" value="InterPro"/>
</dbReference>
<dbReference type="GO" id="GO:0043565">
    <property type="term" value="F:sequence-specific DNA binding"/>
    <property type="evidence" value="ECO:0000314"/>
    <property type="project" value="SGD"/>
</dbReference>
<dbReference type="GO" id="GO:0030527">
    <property type="term" value="F:structural constituent of chromatin"/>
    <property type="evidence" value="ECO:0007669"/>
    <property type="project" value="InterPro"/>
</dbReference>
<dbReference type="GO" id="GO:0030543">
    <property type="term" value="P:2-micrometer plasmid partitioning"/>
    <property type="evidence" value="ECO:0000315"/>
    <property type="project" value="SGD"/>
</dbReference>
<dbReference type="GO" id="GO:0051382">
    <property type="term" value="P:kinetochore assembly"/>
    <property type="evidence" value="ECO:0000315"/>
    <property type="project" value="SGD"/>
</dbReference>
<dbReference type="GO" id="GO:0000278">
    <property type="term" value="P:mitotic cell cycle"/>
    <property type="evidence" value="ECO:0000314"/>
    <property type="project" value="SGD"/>
</dbReference>
<dbReference type="GO" id="GO:0000070">
    <property type="term" value="P:mitotic sister chromatid segregation"/>
    <property type="evidence" value="ECO:0000315"/>
    <property type="project" value="SGD"/>
</dbReference>
<dbReference type="GO" id="GO:0061644">
    <property type="term" value="P:protein localization to CENP-A containing chromatin"/>
    <property type="evidence" value="ECO:0000315"/>
    <property type="project" value="SGD"/>
</dbReference>
<dbReference type="GO" id="GO:0009303">
    <property type="term" value="P:rRNA transcription"/>
    <property type="evidence" value="ECO:0000318"/>
    <property type="project" value="GO_Central"/>
</dbReference>
<dbReference type="CDD" id="cd22911">
    <property type="entry name" value="HFD_H3"/>
    <property type="match status" value="1"/>
</dbReference>
<dbReference type="FunFam" id="1.10.20.10:FF:000102">
    <property type="entry name" value="Histone H3-like centromeric protein CSE4"/>
    <property type="match status" value="1"/>
</dbReference>
<dbReference type="Gene3D" id="1.10.20.10">
    <property type="entry name" value="Histone, subunit A"/>
    <property type="match status" value="1"/>
</dbReference>
<dbReference type="InterPro" id="IPR009072">
    <property type="entry name" value="Histone-fold"/>
</dbReference>
<dbReference type="InterPro" id="IPR007125">
    <property type="entry name" value="Histone_H2A/H2B/H3"/>
</dbReference>
<dbReference type="InterPro" id="IPR000164">
    <property type="entry name" value="Histone_H3/CENP-A"/>
</dbReference>
<dbReference type="PANTHER" id="PTHR45810">
    <property type="entry name" value="HISTONE H3.2"/>
    <property type="match status" value="1"/>
</dbReference>
<dbReference type="Pfam" id="PF00125">
    <property type="entry name" value="Histone"/>
    <property type="match status" value="1"/>
</dbReference>
<dbReference type="PRINTS" id="PR00622">
    <property type="entry name" value="HISTONEH3"/>
</dbReference>
<dbReference type="SMART" id="SM00428">
    <property type="entry name" value="H3"/>
    <property type="match status" value="1"/>
</dbReference>
<dbReference type="SUPFAM" id="SSF47113">
    <property type="entry name" value="Histone-fold"/>
    <property type="match status" value="1"/>
</dbReference>
<dbReference type="PROSITE" id="PS00959">
    <property type="entry name" value="HISTONE_H3_2"/>
    <property type="match status" value="1"/>
</dbReference>
<keyword id="KW-0002">3D-structure</keyword>
<keyword id="KW-0137">Centromere</keyword>
<keyword id="KW-0158">Chromosome</keyword>
<keyword id="KW-0238">DNA-binding</keyword>
<keyword id="KW-0544">Nucleosome core</keyword>
<keyword id="KW-0539">Nucleus</keyword>
<keyword id="KW-1185">Reference proteome</keyword>
<keyword id="KW-0832">Ubl conjugation</keyword>